<protein>
    <recommendedName>
        <fullName evidence="17">Sortilin</fullName>
    </recommendedName>
    <alternativeName>
        <fullName>Neurotensin receptor 3</fullName>
        <shortName>NTR3</shortName>
        <shortName>mNTR3</shortName>
    </alternativeName>
</protein>
<keyword id="KW-0002">3D-structure</keyword>
<keyword id="KW-0025">Alternative splicing</keyword>
<keyword id="KW-1003">Cell membrane</keyword>
<keyword id="KW-0165">Cleavage on pair of basic residues</keyword>
<keyword id="KW-0217">Developmental protein</keyword>
<keyword id="KW-0221">Differentiation</keyword>
<keyword id="KW-1015">Disulfide bond</keyword>
<keyword id="KW-0254">Endocytosis</keyword>
<keyword id="KW-0256">Endoplasmic reticulum</keyword>
<keyword id="KW-0967">Endosome</keyword>
<keyword id="KW-0325">Glycoprotein</keyword>
<keyword id="KW-0333">Golgi apparatus</keyword>
<keyword id="KW-0449">Lipoprotein</keyword>
<keyword id="KW-0458">Lysosome</keyword>
<keyword id="KW-0472">Membrane</keyword>
<keyword id="KW-0539">Nucleus</keyword>
<keyword id="KW-0892">Osteogenesis</keyword>
<keyword id="KW-0564">Palmitate</keyword>
<keyword id="KW-0597">Phosphoprotein</keyword>
<keyword id="KW-0675">Receptor</keyword>
<keyword id="KW-1185">Reference proteome</keyword>
<keyword id="KW-0677">Repeat</keyword>
<keyword id="KW-0732">Signal</keyword>
<keyword id="KW-0812">Transmembrane</keyword>
<keyword id="KW-1133">Transmembrane helix</keyword>
<keyword id="KW-0813">Transport</keyword>
<dbReference type="EMBL" id="AF175279">
    <property type="protein sequence ID" value="AAF22639.1"/>
    <property type="molecule type" value="mRNA"/>
</dbReference>
<dbReference type="EMBL" id="AK147442">
    <property type="protein sequence ID" value="BAE27915.1"/>
    <property type="molecule type" value="mRNA"/>
</dbReference>
<dbReference type="EMBL" id="AL671899">
    <property type="status" value="NOT_ANNOTATED_CDS"/>
    <property type="molecule type" value="Genomic_DNA"/>
</dbReference>
<dbReference type="EMBL" id="BC034129">
    <property type="protein sequence ID" value="AAH34129.1"/>
    <property type="molecule type" value="mRNA"/>
</dbReference>
<dbReference type="EMBL" id="BC056343">
    <property type="protein sequence ID" value="AAH56343.1"/>
    <property type="molecule type" value="mRNA"/>
</dbReference>
<dbReference type="CCDS" id="CCDS17756.1">
    <molecule id="Q6PHU5-1"/>
</dbReference>
<dbReference type="CCDS" id="CCDS80003.1">
    <molecule id="Q6PHU5-2"/>
</dbReference>
<dbReference type="RefSeq" id="NP_001258528.1">
    <molecule id="Q6PHU5-2"/>
    <property type="nucleotide sequence ID" value="NM_001271599.1"/>
</dbReference>
<dbReference type="RefSeq" id="NP_064356.2">
    <molecule id="Q6PHU5-1"/>
    <property type="nucleotide sequence ID" value="NM_019972.3"/>
</dbReference>
<dbReference type="PDB" id="5NMR">
    <property type="method" value="X-ray"/>
    <property type="resolution" value="2.10 A"/>
    <property type="chains" value="A=32-753"/>
</dbReference>
<dbReference type="PDB" id="5NMT">
    <property type="method" value="X-ray"/>
    <property type="resolution" value="2.30 A"/>
    <property type="chains" value="A/B=32-753"/>
</dbReference>
<dbReference type="PDB" id="5NNI">
    <property type="method" value="X-ray"/>
    <property type="resolution" value="3.21 A"/>
    <property type="chains" value="A/B=31-753"/>
</dbReference>
<dbReference type="PDB" id="5NNJ">
    <property type="method" value="X-ray"/>
    <property type="resolution" value="4.00 A"/>
    <property type="chains" value="A/B/C/D=31-753"/>
</dbReference>
<dbReference type="PDB" id="5ZNN">
    <property type="method" value="X-ray"/>
    <property type="resolution" value="2.45 A"/>
    <property type="chains" value="A/B=76-744"/>
</dbReference>
<dbReference type="PDBsum" id="5NMR"/>
<dbReference type="PDBsum" id="5NMT"/>
<dbReference type="PDBsum" id="5NNI"/>
<dbReference type="PDBsum" id="5NNJ"/>
<dbReference type="PDBsum" id="5ZNN"/>
<dbReference type="SASBDB" id="Q6PHU5"/>
<dbReference type="SMR" id="Q6PHU5"/>
<dbReference type="BioGRID" id="203393">
    <property type="interactions" value="12"/>
</dbReference>
<dbReference type="DIP" id="DIP-46095N"/>
<dbReference type="FunCoup" id="Q6PHU5">
    <property type="interactions" value="858"/>
</dbReference>
<dbReference type="IntAct" id="Q6PHU5">
    <property type="interactions" value="12"/>
</dbReference>
<dbReference type="MINT" id="Q6PHU5"/>
<dbReference type="STRING" id="10090.ENSMUSP00000123564"/>
<dbReference type="BindingDB" id="Q6PHU5"/>
<dbReference type="GlyConnect" id="2734">
    <property type="glycosylation" value="6 N-Linked glycans (3 sites)"/>
</dbReference>
<dbReference type="GlyCosmos" id="Q6PHU5">
    <property type="glycosylation" value="6 sites, 5 glycans"/>
</dbReference>
<dbReference type="GlyGen" id="Q6PHU5">
    <property type="glycosylation" value="7 sites, 9 N-linked glycans (4 sites)"/>
</dbReference>
<dbReference type="iPTMnet" id="Q6PHU5"/>
<dbReference type="PhosphoSitePlus" id="Q6PHU5"/>
<dbReference type="SwissPalm" id="Q6PHU5"/>
<dbReference type="jPOST" id="Q6PHU5"/>
<dbReference type="PaxDb" id="10090-ENSMUSP00000099692"/>
<dbReference type="PeptideAtlas" id="Q6PHU5"/>
<dbReference type="ProteomicsDB" id="261549">
    <molecule id="Q6PHU5-1"/>
</dbReference>
<dbReference type="ProteomicsDB" id="261550">
    <molecule id="Q6PHU5-2"/>
</dbReference>
<dbReference type="Antibodypedia" id="1533">
    <property type="antibodies" value="335 antibodies from 33 providers"/>
</dbReference>
<dbReference type="DNASU" id="20661"/>
<dbReference type="Ensembl" id="ENSMUST00000102632.7">
    <molecule id="Q6PHU5-1"/>
    <property type="protein sequence ID" value="ENSMUSP00000099692.5"/>
    <property type="gene ID" value="ENSMUSG00000068747.15"/>
</dbReference>
<dbReference type="Ensembl" id="ENSMUST00000135636.6">
    <molecule id="Q6PHU5-2"/>
    <property type="protein sequence ID" value="ENSMUSP00000123564.3"/>
    <property type="gene ID" value="ENSMUSG00000068747.15"/>
</dbReference>
<dbReference type="GeneID" id="20661"/>
<dbReference type="KEGG" id="mmu:20661"/>
<dbReference type="UCSC" id="uc008qyr.2">
    <molecule id="Q6PHU5-1"/>
    <property type="organism name" value="mouse"/>
</dbReference>
<dbReference type="UCSC" id="uc008qys.2">
    <molecule id="Q6PHU5-2"/>
    <property type="organism name" value="mouse"/>
</dbReference>
<dbReference type="AGR" id="MGI:1338015"/>
<dbReference type="CTD" id="6272"/>
<dbReference type="MGI" id="MGI:1338015">
    <property type="gene designation" value="Sort1"/>
</dbReference>
<dbReference type="VEuPathDB" id="HostDB:ENSMUSG00000068747"/>
<dbReference type="eggNOG" id="KOG3511">
    <property type="taxonomic scope" value="Eukaryota"/>
</dbReference>
<dbReference type="GeneTree" id="ENSGT01030000234563"/>
<dbReference type="HOGENOM" id="CLU_013596_0_0_1"/>
<dbReference type="InParanoid" id="Q6PHU5"/>
<dbReference type="OMA" id="FAPFYSV"/>
<dbReference type="PhylomeDB" id="Q6PHU5"/>
<dbReference type="TreeFam" id="TF324918"/>
<dbReference type="Reactome" id="R-MMU-432722">
    <property type="pathway name" value="Golgi Associated Vesicle Biogenesis"/>
</dbReference>
<dbReference type="BioGRID-ORCS" id="20661">
    <property type="hits" value="1 hit in 76 CRISPR screens"/>
</dbReference>
<dbReference type="ChiTaRS" id="Sort1">
    <property type="organism name" value="mouse"/>
</dbReference>
<dbReference type="PRO" id="PR:Q6PHU5"/>
<dbReference type="Proteomes" id="UP000000589">
    <property type="component" value="Chromosome 3"/>
</dbReference>
<dbReference type="RNAct" id="Q6PHU5">
    <property type="molecule type" value="protein"/>
</dbReference>
<dbReference type="Bgee" id="ENSMUSG00000068747">
    <property type="expression patterns" value="Expressed in dentate gyrus of hippocampal formation granule cell and 249 other cell types or tissues"/>
</dbReference>
<dbReference type="GO" id="GO:0009986">
    <property type="term" value="C:cell surface"/>
    <property type="evidence" value="ECO:0007669"/>
    <property type="project" value="Ensembl"/>
</dbReference>
<dbReference type="GO" id="GO:0150053">
    <property type="term" value="C:cerebellar climbing fiber to Purkinje cell synapse"/>
    <property type="evidence" value="ECO:0000314"/>
    <property type="project" value="SynGO"/>
</dbReference>
<dbReference type="GO" id="GO:0005905">
    <property type="term" value="C:clathrin-coated pit"/>
    <property type="evidence" value="ECO:0007669"/>
    <property type="project" value="Ensembl"/>
</dbReference>
<dbReference type="GO" id="GO:0030659">
    <property type="term" value="C:cytoplasmic vesicle membrane"/>
    <property type="evidence" value="ECO:0000314"/>
    <property type="project" value="MGI"/>
</dbReference>
<dbReference type="GO" id="GO:0005829">
    <property type="term" value="C:cytosol"/>
    <property type="evidence" value="ECO:0007669"/>
    <property type="project" value="Ensembl"/>
</dbReference>
<dbReference type="GO" id="GO:0005769">
    <property type="term" value="C:early endosome"/>
    <property type="evidence" value="ECO:0007669"/>
    <property type="project" value="Ensembl"/>
</dbReference>
<dbReference type="GO" id="GO:0005789">
    <property type="term" value="C:endoplasmic reticulum membrane"/>
    <property type="evidence" value="ECO:0007669"/>
    <property type="project" value="UniProtKB-SubCell"/>
</dbReference>
<dbReference type="GO" id="GO:0010008">
    <property type="term" value="C:endosome membrane"/>
    <property type="evidence" value="ECO:0007669"/>
    <property type="project" value="UniProtKB-SubCell"/>
</dbReference>
<dbReference type="GO" id="GO:0005794">
    <property type="term" value="C:Golgi apparatus"/>
    <property type="evidence" value="ECO:0000250"/>
    <property type="project" value="UniProtKB"/>
</dbReference>
<dbReference type="GO" id="GO:0032580">
    <property type="term" value="C:Golgi cisterna membrane"/>
    <property type="evidence" value="ECO:0007669"/>
    <property type="project" value="UniProtKB-SubCell"/>
</dbReference>
<dbReference type="GO" id="GO:0005765">
    <property type="term" value="C:lysosomal membrane"/>
    <property type="evidence" value="ECO:0007669"/>
    <property type="project" value="UniProtKB-SubCell"/>
</dbReference>
<dbReference type="GO" id="GO:0005764">
    <property type="term" value="C:lysosome"/>
    <property type="evidence" value="ECO:0000250"/>
    <property type="project" value="UniProtKB"/>
</dbReference>
<dbReference type="GO" id="GO:0031965">
    <property type="term" value="C:nuclear membrane"/>
    <property type="evidence" value="ECO:0007669"/>
    <property type="project" value="UniProtKB-SubCell"/>
</dbReference>
<dbReference type="GO" id="GO:0048471">
    <property type="term" value="C:perinuclear region of cytoplasm"/>
    <property type="evidence" value="ECO:0007669"/>
    <property type="project" value="Ensembl"/>
</dbReference>
<dbReference type="GO" id="GO:0005886">
    <property type="term" value="C:plasma membrane"/>
    <property type="evidence" value="ECO:0000314"/>
    <property type="project" value="BHF-UCL"/>
</dbReference>
<dbReference type="GO" id="GO:0030140">
    <property type="term" value="C:trans-Golgi network transport vesicle"/>
    <property type="evidence" value="ECO:0000314"/>
    <property type="project" value="MGI"/>
</dbReference>
<dbReference type="GO" id="GO:0019899">
    <property type="term" value="F:enzyme binding"/>
    <property type="evidence" value="ECO:0007669"/>
    <property type="project" value="Ensembl"/>
</dbReference>
<dbReference type="GO" id="GO:0048406">
    <property type="term" value="F:nerve growth factor binding"/>
    <property type="evidence" value="ECO:0007669"/>
    <property type="project" value="Ensembl"/>
</dbReference>
<dbReference type="GO" id="GO:0010465">
    <property type="term" value="F:nerve growth factor receptor activity"/>
    <property type="evidence" value="ECO:0007669"/>
    <property type="project" value="Ensembl"/>
</dbReference>
<dbReference type="GO" id="GO:0030379">
    <property type="term" value="F:neurotensin receptor activity, non-G protein-coupled"/>
    <property type="evidence" value="ECO:0007669"/>
    <property type="project" value="Ensembl"/>
</dbReference>
<dbReference type="GO" id="GO:1905394">
    <property type="term" value="F:retromer complex binding"/>
    <property type="evidence" value="ECO:0007669"/>
    <property type="project" value="Ensembl"/>
</dbReference>
<dbReference type="GO" id="GO:0046323">
    <property type="term" value="P:D-glucose import"/>
    <property type="evidence" value="ECO:0000315"/>
    <property type="project" value="BHF-UCL"/>
</dbReference>
<dbReference type="GO" id="GO:0006897">
    <property type="term" value="P:endocytosis"/>
    <property type="evidence" value="ECO:0000315"/>
    <property type="project" value="MGI"/>
</dbReference>
<dbReference type="GO" id="GO:0008333">
    <property type="term" value="P:endosome to lysosome transport"/>
    <property type="evidence" value="ECO:0007669"/>
    <property type="project" value="Ensembl"/>
</dbReference>
<dbReference type="GO" id="GO:0032509">
    <property type="term" value="P:endosome transport via multivesicular body sorting pathway"/>
    <property type="evidence" value="ECO:0007669"/>
    <property type="project" value="Ensembl"/>
</dbReference>
<dbReference type="GO" id="GO:0008625">
    <property type="term" value="P:extrinsic apoptotic signaling pathway via death domain receptors"/>
    <property type="evidence" value="ECO:0007669"/>
    <property type="project" value="Ensembl"/>
</dbReference>
<dbReference type="GO" id="GO:0006895">
    <property type="term" value="P:Golgi to endosome transport"/>
    <property type="evidence" value="ECO:0007669"/>
    <property type="project" value="Ensembl"/>
</dbReference>
<dbReference type="GO" id="GO:0090160">
    <property type="term" value="P:Golgi to lysosome transport"/>
    <property type="evidence" value="ECO:0000250"/>
    <property type="project" value="UniProtKB"/>
</dbReference>
<dbReference type="GO" id="GO:0099558">
    <property type="term" value="P:maintenance of synapse structure"/>
    <property type="evidence" value="ECO:0000314"/>
    <property type="project" value="SynGO"/>
</dbReference>
<dbReference type="GO" id="GO:0014902">
    <property type="term" value="P:myotube differentiation"/>
    <property type="evidence" value="ECO:0000315"/>
    <property type="project" value="BHF-UCL"/>
</dbReference>
<dbReference type="GO" id="GO:0045599">
    <property type="term" value="P:negative regulation of fat cell differentiation"/>
    <property type="evidence" value="ECO:0000314"/>
    <property type="project" value="MGI"/>
</dbReference>
<dbReference type="GO" id="GO:0007218">
    <property type="term" value="P:neuropeptide signaling pathway"/>
    <property type="evidence" value="ECO:0007669"/>
    <property type="project" value="Ensembl"/>
</dbReference>
<dbReference type="GO" id="GO:0048011">
    <property type="term" value="P:neurotrophin TRK receptor signaling pathway"/>
    <property type="evidence" value="ECO:0007669"/>
    <property type="project" value="Ensembl"/>
</dbReference>
<dbReference type="GO" id="GO:0001503">
    <property type="term" value="P:ossification"/>
    <property type="evidence" value="ECO:0007669"/>
    <property type="project" value="UniProtKB-KW"/>
</dbReference>
<dbReference type="GO" id="GO:0048227">
    <property type="term" value="P:plasma membrane to endosome transport"/>
    <property type="evidence" value="ECO:0007669"/>
    <property type="project" value="Ensembl"/>
</dbReference>
<dbReference type="GO" id="GO:0006622">
    <property type="term" value="P:protein targeting to lysosome"/>
    <property type="evidence" value="ECO:0000315"/>
    <property type="project" value="MGI"/>
</dbReference>
<dbReference type="GO" id="GO:0010468">
    <property type="term" value="P:regulation of gene expression"/>
    <property type="evidence" value="ECO:0007669"/>
    <property type="project" value="Ensembl"/>
</dbReference>
<dbReference type="GO" id="GO:0032868">
    <property type="term" value="P:response to insulin"/>
    <property type="evidence" value="ECO:0000315"/>
    <property type="project" value="BHF-UCL"/>
</dbReference>
<dbReference type="GO" id="GO:0016050">
    <property type="term" value="P:vesicle organization"/>
    <property type="evidence" value="ECO:0000315"/>
    <property type="project" value="BHF-UCL"/>
</dbReference>
<dbReference type="FunFam" id="2.10.70.80:FF:000003">
    <property type="entry name" value="Sortilin"/>
    <property type="match status" value="1"/>
</dbReference>
<dbReference type="FunFam" id="2.130.10.10:FF:000802">
    <property type="entry name" value="Sortilin"/>
    <property type="match status" value="1"/>
</dbReference>
<dbReference type="FunFam" id="3.30.60.270:FF:000004">
    <property type="entry name" value="Sortilin"/>
    <property type="match status" value="1"/>
</dbReference>
<dbReference type="Gene3D" id="2.10.70.80">
    <property type="match status" value="1"/>
</dbReference>
<dbReference type="Gene3D" id="3.30.60.270">
    <property type="match status" value="1"/>
</dbReference>
<dbReference type="Gene3D" id="2.130.10.10">
    <property type="entry name" value="YVTN repeat-like/Quinoprotein amine dehydrogenase"/>
    <property type="match status" value="1"/>
</dbReference>
<dbReference type="InterPro" id="IPR031777">
    <property type="entry name" value="Sortilin_C"/>
</dbReference>
<dbReference type="InterPro" id="IPR031778">
    <property type="entry name" value="Sortilin_N"/>
</dbReference>
<dbReference type="InterPro" id="IPR006581">
    <property type="entry name" value="VPS10"/>
</dbReference>
<dbReference type="InterPro" id="IPR050310">
    <property type="entry name" value="VPS10-sortilin"/>
</dbReference>
<dbReference type="InterPro" id="IPR015943">
    <property type="entry name" value="WD40/YVTN_repeat-like_dom_sf"/>
</dbReference>
<dbReference type="PANTHER" id="PTHR12106:SF23">
    <property type="entry name" value="SORTILIN"/>
    <property type="match status" value="1"/>
</dbReference>
<dbReference type="PANTHER" id="PTHR12106">
    <property type="entry name" value="SORTILIN RELATED"/>
    <property type="match status" value="1"/>
</dbReference>
<dbReference type="Pfam" id="PF15902">
    <property type="entry name" value="Sortilin-Vps10"/>
    <property type="match status" value="1"/>
</dbReference>
<dbReference type="Pfam" id="PF15901">
    <property type="entry name" value="Sortilin_C"/>
    <property type="match status" value="1"/>
</dbReference>
<dbReference type="SMART" id="SM00602">
    <property type="entry name" value="VPS10"/>
    <property type="match status" value="1"/>
</dbReference>
<dbReference type="SUPFAM" id="SSF110296">
    <property type="entry name" value="Oligoxyloglucan reducing end-specific cellobiohydrolase"/>
    <property type="match status" value="2"/>
</dbReference>
<reference key="1">
    <citation type="journal article" date="2001" name="FEBS Lett.">
        <title>Pharmacological properties of the mouse neurotensin receptor 3. Maintenance of cell surface receptor during internalization of neurotensin.</title>
        <authorList>
            <person name="Navarro V."/>
            <person name="Martin S."/>
            <person name="Sarret P."/>
            <person name="Nielsen M.S."/>
            <person name="Petersen C.M."/>
            <person name="Vincent J.-P."/>
            <person name="Mazella J."/>
        </authorList>
    </citation>
    <scope>NUCLEOTIDE SEQUENCE [MRNA] (ISOFORM 1)</scope>
    <scope>IDENTIFICATION AS A NEUROTENSIN RECEPTOR</scope>
    <scope>SUBCELLULAR LOCATION</scope>
    <scope>GLYCOSYLATION</scope>
    <source>
        <strain>BALB/cJ</strain>
        <tissue>Brain</tissue>
    </source>
</reference>
<reference key="2">
    <citation type="journal article" date="2005" name="Science">
        <title>The transcriptional landscape of the mammalian genome.</title>
        <authorList>
            <person name="Carninci P."/>
            <person name="Kasukawa T."/>
            <person name="Katayama S."/>
            <person name="Gough J."/>
            <person name="Frith M.C."/>
            <person name="Maeda N."/>
            <person name="Oyama R."/>
            <person name="Ravasi T."/>
            <person name="Lenhard B."/>
            <person name="Wells C."/>
            <person name="Kodzius R."/>
            <person name="Shimokawa K."/>
            <person name="Bajic V.B."/>
            <person name="Brenner S.E."/>
            <person name="Batalov S."/>
            <person name="Forrest A.R."/>
            <person name="Zavolan M."/>
            <person name="Davis M.J."/>
            <person name="Wilming L.G."/>
            <person name="Aidinis V."/>
            <person name="Allen J.E."/>
            <person name="Ambesi-Impiombato A."/>
            <person name="Apweiler R."/>
            <person name="Aturaliya R.N."/>
            <person name="Bailey T.L."/>
            <person name="Bansal M."/>
            <person name="Baxter L."/>
            <person name="Beisel K.W."/>
            <person name="Bersano T."/>
            <person name="Bono H."/>
            <person name="Chalk A.M."/>
            <person name="Chiu K.P."/>
            <person name="Choudhary V."/>
            <person name="Christoffels A."/>
            <person name="Clutterbuck D.R."/>
            <person name="Crowe M.L."/>
            <person name="Dalla E."/>
            <person name="Dalrymple B.P."/>
            <person name="de Bono B."/>
            <person name="Della Gatta G."/>
            <person name="di Bernardo D."/>
            <person name="Down T."/>
            <person name="Engstrom P."/>
            <person name="Fagiolini M."/>
            <person name="Faulkner G."/>
            <person name="Fletcher C.F."/>
            <person name="Fukushima T."/>
            <person name="Furuno M."/>
            <person name="Futaki S."/>
            <person name="Gariboldi M."/>
            <person name="Georgii-Hemming P."/>
            <person name="Gingeras T.R."/>
            <person name="Gojobori T."/>
            <person name="Green R.E."/>
            <person name="Gustincich S."/>
            <person name="Harbers M."/>
            <person name="Hayashi Y."/>
            <person name="Hensch T.K."/>
            <person name="Hirokawa N."/>
            <person name="Hill D."/>
            <person name="Huminiecki L."/>
            <person name="Iacono M."/>
            <person name="Ikeo K."/>
            <person name="Iwama A."/>
            <person name="Ishikawa T."/>
            <person name="Jakt M."/>
            <person name="Kanapin A."/>
            <person name="Katoh M."/>
            <person name="Kawasawa Y."/>
            <person name="Kelso J."/>
            <person name="Kitamura H."/>
            <person name="Kitano H."/>
            <person name="Kollias G."/>
            <person name="Krishnan S.P."/>
            <person name="Kruger A."/>
            <person name="Kummerfeld S.K."/>
            <person name="Kurochkin I.V."/>
            <person name="Lareau L.F."/>
            <person name="Lazarevic D."/>
            <person name="Lipovich L."/>
            <person name="Liu J."/>
            <person name="Liuni S."/>
            <person name="McWilliam S."/>
            <person name="Madan Babu M."/>
            <person name="Madera M."/>
            <person name="Marchionni L."/>
            <person name="Matsuda H."/>
            <person name="Matsuzawa S."/>
            <person name="Miki H."/>
            <person name="Mignone F."/>
            <person name="Miyake S."/>
            <person name="Morris K."/>
            <person name="Mottagui-Tabar S."/>
            <person name="Mulder N."/>
            <person name="Nakano N."/>
            <person name="Nakauchi H."/>
            <person name="Ng P."/>
            <person name="Nilsson R."/>
            <person name="Nishiguchi S."/>
            <person name="Nishikawa S."/>
            <person name="Nori F."/>
            <person name="Ohara O."/>
            <person name="Okazaki Y."/>
            <person name="Orlando V."/>
            <person name="Pang K.C."/>
            <person name="Pavan W.J."/>
            <person name="Pavesi G."/>
            <person name="Pesole G."/>
            <person name="Petrovsky N."/>
            <person name="Piazza S."/>
            <person name="Reed J."/>
            <person name="Reid J.F."/>
            <person name="Ring B.Z."/>
            <person name="Ringwald M."/>
            <person name="Rost B."/>
            <person name="Ruan Y."/>
            <person name="Salzberg S.L."/>
            <person name="Sandelin A."/>
            <person name="Schneider C."/>
            <person name="Schoenbach C."/>
            <person name="Sekiguchi K."/>
            <person name="Semple C.A."/>
            <person name="Seno S."/>
            <person name="Sessa L."/>
            <person name="Sheng Y."/>
            <person name="Shibata Y."/>
            <person name="Shimada H."/>
            <person name="Shimada K."/>
            <person name="Silva D."/>
            <person name="Sinclair B."/>
            <person name="Sperling S."/>
            <person name="Stupka E."/>
            <person name="Sugiura K."/>
            <person name="Sultana R."/>
            <person name="Takenaka Y."/>
            <person name="Taki K."/>
            <person name="Tammoja K."/>
            <person name="Tan S.L."/>
            <person name="Tang S."/>
            <person name="Taylor M.S."/>
            <person name="Tegner J."/>
            <person name="Teichmann S.A."/>
            <person name="Ueda H.R."/>
            <person name="van Nimwegen E."/>
            <person name="Verardo R."/>
            <person name="Wei C.L."/>
            <person name="Yagi K."/>
            <person name="Yamanishi H."/>
            <person name="Zabarovsky E."/>
            <person name="Zhu S."/>
            <person name="Zimmer A."/>
            <person name="Hide W."/>
            <person name="Bult C."/>
            <person name="Grimmond S.M."/>
            <person name="Teasdale R.D."/>
            <person name="Liu E.T."/>
            <person name="Brusic V."/>
            <person name="Quackenbush J."/>
            <person name="Wahlestedt C."/>
            <person name="Mattick J.S."/>
            <person name="Hume D.A."/>
            <person name="Kai C."/>
            <person name="Sasaki D."/>
            <person name="Tomaru Y."/>
            <person name="Fukuda S."/>
            <person name="Kanamori-Katayama M."/>
            <person name="Suzuki M."/>
            <person name="Aoki J."/>
            <person name="Arakawa T."/>
            <person name="Iida J."/>
            <person name="Imamura K."/>
            <person name="Itoh M."/>
            <person name="Kato T."/>
            <person name="Kawaji H."/>
            <person name="Kawagashira N."/>
            <person name="Kawashima T."/>
            <person name="Kojima M."/>
            <person name="Kondo S."/>
            <person name="Konno H."/>
            <person name="Nakano K."/>
            <person name="Ninomiya N."/>
            <person name="Nishio T."/>
            <person name="Okada M."/>
            <person name="Plessy C."/>
            <person name="Shibata K."/>
            <person name="Shiraki T."/>
            <person name="Suzuki S."/>
            <person name="Tagami M."/>
            <person name="Waki K."/>
            <person name="Watahiki A."/>
            <person name="Okamura-Oho Y."/>
            <person name="Suzuki H."/>
            <person name="Kawai J."/>
            <person name="Hayashizaki Y."/>
        </authorList>
    </citation>
    <scope>NUCLEOTIDE SEQUENCE [LARGE SCALE MRNA] (ISOFORM 2)</scope>
    <source>
        <strain>C57BL/6J</strain>
        <tissue>Brain</tissue>
    </source>
</reference>
<reference key="3">
    <citation type="journal article" date="2009" name="PLoS Biol.">
        <title>Lineage-specific biology revealed by a finished genome assembly of the mouse.</title>
        <authorList>
            <person name="Church D.M."/>
            <person name="Goodstadt L."/>
            <person name="Hillier L.W."/>
            <person name="Zody M.C."/>
            <person name="Goldstein S."/>
            <person name="She X."/>
            <person name="Bult C.J."/>
            <person name="Agarwala R."/>
            <person name="Cherry J.L."/>
            <person name="DiCuccio M."/>
            <person name="Hlavina W."/>
            <person name="Kapustin Y."/>
            <person name="Meric P."/>
            <person name="Maglott D."/>
            <person name="Birtle Z."/>
            <person name="Marques A.C."/>
            <person name="Graves T."/>
            <person name="Zhou S."/>
            <person name="Teague B."/>
            <person name="Potamousis K."/>
            <person name="Churas C."/>
            <person name="Place M."/>
            <person name="Herschleb J."/>
            <person name="Runnheim R."/>
            <person name="Forrest D."/>
            <person name="Amos-Landgraf J."/>
            <person name="Schwartz D.C."/>
            <person name="Cheng Z."/>
            <person name="Lindblad-Toh K."/>
            <person name="Eichler E.E."/>
            <person name="Ponting C.P."/>
        </authorList>
    </citation>
    <scope>NUCLEOTIDE SEQUENCE [LARGE SCALE GENOMIC DNA]</scope>
    <source>
        <strain>C57BL/6J</strain>
    </source>
</reference>
<reference key="4">
    <citation type="journal article" date="2004" name="Genome Res.">
        <title>The status, quality, and expansion of the NIH full-length cDNA project: the Mammalian Gene Collection (MGC).</title>
        <authorList>
            <consortium name="The MGC Project Team"/>
        </authorList>
    </citation>
    <scope>NUCLEOTIDE SEQUENCE [LARGE SCALE MRNA] (ISOFORM 1)</scope>
    <source>
        <strain>C57BL/6J</strain>
        <tissue>Brain</tissue>
        <tissue>Salivary gland</tissue>
    </source>
</reference>
<reference key="5">
    <citation type="journal article" date="1998" name="J. Biol. Chem.">
        <title>Sortilin is the major 110-kDa protein in GLUT4 vesicles from adipocytes.</title>
        <authorList>
            <person name="Morris N.J."/>
            <person name="Ross S.A."/>
            <person name="Lane W.S."/>
            <person name="Moestrup S.K."/>
            <person name="Petersen C.M."/>
            <person name="Keller S.R."/>
            <person name="Lienhard G.E."/>
        </authorList>
    </citation>
    <scope>SUBCELLULAR LOCATION</scope>
    <scope>INDUCTION</scope>
</reference>
<reference key="6">
    <citation type="journal article" date="1999" name="Brain Res. Mol. Brain Res.">
        <title>Expression of the 100-kDa neurotensin receptor sortilin during mouse embryonal development.</title>
        <authorList>
            <person name="Hermans-Borgmeyer I."/>
            <person name="Hermey G."/>
            <person name="Nykjaer A."/>
            <person name="Schaller C."/>
        </authorList>
    </citation>
    <scope>TISSUE SPECIFICITY</scope>
    <scope>DEVELOPMENTAL STAGE</scope>
</reference>
<reference key="7">
    <citation type="journal article" date="1999" name="J. Biol. Chem.">
        <title>Sortilin/neurotensin receptor-3 binds and mediates degradation of lipoprotein lipase.</title>
        <authorList>
            <person name="Nielsen M.S."/>
            <person name="Jacobsen C."/>
            <person name="Olivecrona G."/>
            <person name="Gliemann J."/>
            <person name="Petersen C.M."/>
        </authorList>
    </citation>
    <scope>INTERACTION WITH LPL</scope>
</reference>
<reference key="8">
    <citation type="journal article" date="2000" name="Mol. Cell. Biol.">
        <title>Characterization of insulin-responsive GLUT4 storage vesicles isolated from 3T3-L1 adipocytes.</title>
        <authorList>
            <person name="Hashiramoto M."/>
            <person name="James D.E."/>
        </authorList>
    </citation>
    <scope>FUNCTION</scope>
</reference>
<reference key="9">
    <citation type="journal article" date="2004" name="Mol. Reprod. Dev.">
        <title>Study of the mouse sortilin gene: effects of its transient silencing by RNA interference in TM4 Sertoli cells.</title>
        <authorList>
            <person name="Zeng J."/>
            <person name="Hassan A.J."/>
            <person name="Morales C.R."/>
        </authorList>
    </citation>
    <scope>FUNCTION</scope>
    <scope>INTERACTION WITH PSAP</scope>
    <scope>SUBCELLULAR LOCATION</scope>
</reference>
<reference key="10">
    <citation type="journal article" date="2004" name="Mol. Reprod. Dev.">
        <title>The trafficking of prosaposin (SGP-1) and GM2AP to the lysosomes of TM4 Sertoli cells is mediated by sortilin and monomeric adaptor proteins.</title>
        <authorList>
            <person name="Hassan A.J."/>
            <person name="Zeng J."/>
            <person name="Ni X."/>
            <person name="Morales C.R."/>
        </authorList>
    </citation>
    <scope>FUNCTION</scope>
</reference>
<reference key="11">
    <citation type="journal article" date="2004" name="J. Neurosci. Res.">
        <title>Neurotensin receptor-3/sortilin mediates neurotensin-induced cytokine/chemokine expression in a murine microglial cell line.</title>
        <authorList>
            <person name="Dicou E."/>
            <person name="Vincent J.-P."/>
            <person name="Mazella J."/>
        </authorList>
    </citation>
    <scope>FUNCTION</scope>
</reference>
<reference key="12">
    <citation type="journal article" date="2005" name="Dev. Cell">
        <title>Sortilin is essential and sufficient for the formation of Glut4 storage vesicles in 3T3-L1 adipocytes.</title>
        <authorList>
            <person name="Shi J."/>
            <person name="Kandror K.V."/>
        </authorList>
    </citation>
    <scope>FUNCTION</scope>
    <scope>INTERACTION WITH SLC2A4</scope>
    <scope>SUBCELLULAR LOCATION</scope>
    <scope>INDUCTION</scope>
</reference>
<reference key="13">
    <citation type="journal article" date="2007" name="Proc. Natl. Acad. Sci. U.S.A.">
        <title>Large-scale phosphorylation analysis of mouse liver.</title>
        <authorList>
            <person name="Villen J."/>
            <person name="Beausoleil S.A."/>
            <person name="Gerber S.A."/>
            <person name="Gygi S.P."/>
        </authorList>
    </citation>
    <scope>PHOSPHORYLATION [LARGE SCALE ANALYSIS] AT SER-819</scope>
    <scope>IDENTIFICATION BY MASS SPECTROMETRY [LARGE SCALE ANALYSIS]</scope>
    <source>
        <tissue>Liver</tissue>
    </source>
</reference>
<reference key="14">
    <citation type="journal article" date="2009" name="EMBO J.">
        <title>NRH2 is a trafficking switch to regulate sortilin localization and permit proneurotrophin-induced cell death.</title>
        <authorList>
            <person name="Kim T."/>
            <person name="Hempstead B.L."/>
        </authorList>
    </citation>
    <scope>FUNCTION</scope>
    <scope>SUBCELLULAR LOCATION</scope>
    <scope>INTERACTION WITH NGFR AND NRADD</scope>
</reference>
<reference key="15">
    <citation type="journal article" date="2010" name="Cell">
        <title>A tissue-specific atlas of mouse protein phosphorylation and expression.</title>
        <authorList>
            <person name="Huttlin E.L."/>
            <person name="Jedrychowski M.P."/>
            <person name="Elias J.E."/>
            <person name="Goswami T."/>
            <person name="Rad R."/>
            <person name="Beausoleil S.A."/>
            <person name="Villen J."/>
            <person name="Haas W."/>
            <person name="Sowa M.E."/>
            <person name="Gygi S.P."/>
        </authorList>
    </citation>
    <scope>PHOSPHORYLATION [LARGE SCALE ANALYSIS] AT SER-819</scope>
    <scope>IDENTIFICATION BY MASS SPECTROMETRY [LARGE SCALE ANALYSIS]</scope>
    <source>
        <tissue>Brain</tissue>
        <tissue>Brown adipose tissue</tissue>
        <tissue>Kidney</tissue>
        <tissue>Liver</tissue>
        <tissue>Lung</tissue>
        <tissue>Pancreas</tissue>
        <tissue>Spleen</tissue>
        <tissue>Testis</tissue>
    </source>
</reference>
<reference key="16">
    <citation type="journal article" date="2011" name="Nat. Neurosci.">
        <title>Sortilin associates with Trk receptors to enhance anterograde transport and neurotrophin signaling.</title>
        <authorList>
            <person name="Vaegter C.B."/>
            <person name="Jansen P."/>
            <person name="Fjorback A.W."/>
            <person name="Glerup S."/>
            <person name="Skeldal S."/>
            <person name="Kjolby M."/>
            <person name="Richner M."/>
            <person name="Erdmann B."/>
            <person name="Nyengaard J.R."/>
            <person name="Tessarollo L."/>
            <person name="Lewin G.R."/>
            <person name="Willnow T.E."/>
            <person name="Chao M.V."/>
            <person name="Nykjaer A."/>
        </authorList>
    </citation>
    <scope>FUNCTION IN NTRK1 SIGNALING</scope>
</reference>
<accession>Q6PHU5</accession>
<accession>A2AEE8</accession>
<accession>Q3UHE2</accession>
<accession>Q8K043</accession>
<accession>Q9QXW6</accession>
<evidence type="ECO:0000250" key="1"/>
<evidence type="ECO:0000250" key="2">
    <source>
        <dbReference type="UniProtKB" id="O54861"/>
    </source>
</evidence>
<evidence type="ECO:0000250" key="3">
    <source>
        <dbReference type="UniProtKB" id="Q99523"/>
    </source>
</evidence>
<evidence type="ECO:0000255" key="4"/>
<evidence type="ECO:0000256" key="5">
    <source>
        <dbReference type="SAM" id="MobiDB-lite"/>
    </source>
</evidence>
<evidence type="ECO:0000269" key="6">
    <source>
    </source>
</evidence>
<evidence type="ECO:0000269" key="7">
    <source>
    </source>
</evidence>
<evidence type="ECO:0000269" key="8">
    <source>
    </source>
</evidence>
<evidence type="ECO:0000269" key="9">
    <source>
    </source>
</evidence>
<evidence type="ECO:0000269" key="10">
    <source>
    </source>
</evidence>
<evidence type="ECO:0000269" key="11">
    <source>
    </source>
</evidence>
<evidence type="ECO:0000269" key="12">
    <source>
    </source>
</evidence>
<evidence type="ECO:0000269" key="13">
    <source>
    </source>
</evidence>
<evidence type="ECO:0000269" key="14">
    <source>
    </source>
</evidence>
<evidence type="ECO:0000269" key="15">
    <source>
    </source>
</evidence>
<evidence type="ECO:0000303" key="16">
    <source>
    </source>
</evidence>
<evidence type="ECO:0000305" key="17"/>
<evidence type="ECO:0000312" key="18">
    <source>
        <dbReference type="MGI" id="MGI:1338015"/>
    </source>
</evidence>
<evidence type="ECO:0007744" key="19">
    <source>
    </source>
</evidence>
<evidence type="ECO:0007744" key="20">
    <source>
    </source>
</evidence>
<evidence type="ECO:0007829" key="21">
    <source>
        <dbReference type="PDB" id="5NMR"/>
    </source>
</evidence>
<evidence type="ECO:0007829" key="22">
    <source>
        <dbReference type="PDB" id="5NMT"/>
    </source>
</evidence>
<evidence type="ECO:0007829" key="23">
    <source>
        <dbReference type="PDB" id="5NNI"/>
    </source>
</evidence>
<evidence type="ECO:0007829" key="24">
    <source>
        <dbReference type="PDB" id="5ZNN"/>
    </source>
</evidence>
<comment type="function">
    <text evidence="8 9 10 11 12 13 14">Functions as a sorting receptor in the Golgi compartment and as a clearance receptor on the cell surface. Required for protein transport from the Golgi apparatus to the lysosomes by a pathway that is independent of the mannose-6-phosphate receptor (M6PR). Lysosomal proteins bind specifically to the receptor in the Golgi apparatus and the resulting receptor-ligand complex is transported to an acidic prelysosomal compartment where the low pH mediates the dissociation of the complex. The receptor is then recycled back to the Golgi for another round of trafficking through its binding to the retromer. Also required for protein transport from the Golgi apparatus to the endosomes. Promotes neuronal apoptosis by mediating endocytosis of the proapoptotic precursor forms of BDNF (proBDNF) and NGFB (proNGFB). Also acts as a receptor for neurotensin. May promote mineralization of the extracellular matrix during osteogenic differentiation by scavenging extracellular LPL. Probably required in adipocytes for the formation of specialized storage vesicles containing the glucose transporter SLC2A4/GLUT4 (GLUT4 storage vesicles, or GSVs). These vesicles provide a stable pool of SLC2A4 and confer increased responsiveness to insulin. May also mediate transport from the endoplasmic reticulum to the Golgi.</text>
</comment>
<comment type="subunit">
    <text evidence="3 7 9 12 13">Interacts with the cytosolic adapter proteins GGA1 and GGA2. Interacts with numerous ligands including the receptor-associated protein LRPAP1/RAP, NTS and GM2A. Forms a complex with NGFR which binds specifically to the precursor forms of NGFB (proNGFB) and BDNF (proBDNF). Interacts with the Trk receptors NTRK1, NTRK2 and NTRK3; may regulate their anterograde axonal transport and signaling (By similarity). Interacts with LPL (PubMed:10085125). Interacts with PSAP (PubMed:15236332). Interacts with SLC2A4 (PubMed:15992544). Interacts with NRADD and NGFR (PubMed:19407813). Interaction with NRADD protects against degradation in the lysosome. Interacts with CLN5 (By similarity). Interacts with GRN; this interaction mediates endocytosis and lysosome delivery of progranulin; interaction occurs at the neuronal cell surface in a stressed nervous system (By similarity). Interacts with the heterotrimeric retromer cargo-selective complex (CSC), also described as vacuolar protein sorting subcomplex (VPS), formed by VPS26 (VPS26A or VPS26B), VPS29 and VPS35; which is involved in retrograde trafficking of the receptor from endosomes to the Golgi apparatus (By similarity). Interacts with SMPD1; the interaction is required for SMPD1 targeting to lysosomes (By similarity).</text>
</comment>
<comment type="interaction">
    <interactant intactId="EBI-6985663">
        <id>Q6PHU5</id>
    </interactant>
    <interactant intactId="EBI-78814">
        <id>P12023</id>
        <label>App</label>
    </interactant>
    <organismsDiffer>false</organismsDiffer>
    <experiments>3</experiments>
</comment>
<comment type="interaction">
    <interactant intactId="EBI-6985663">
        <id>Q6PHU5</id>
    </interactant>
    <interactant intactId="EBI-7091062">
        <id>P97438</id>
        <label>Kcnk2</label>
    </interactant>
    <organismsDiffer>false</organismsDiffer>
    <experiments>4</experiments>
</comment>
<comment type="interaction">
    <interactant intactId="EBI-6985663">
        <id>Q6PHU5</id>
    </interactant>
    <interactant intactId="EBI-6985725">
        <id>Q8CJ26</id>
        <label>Nradd</label>
    </interactant>
    <organismsDiffer>false</organismsDiffer>
    <experiments>5</experiments>
</comment>
<comment type="interaction">
    <interactant intactId="EBI-6985663">
        <id>Q6PHU5</id>
    </interactant>
    <interactant intactId="EBI-309647">
        <id>P15209</id>
        <label>Ntrk2</label>
    </interactant>
    <organismsDiffer>false</organismsDiffer>
    <experiments>3</experiments>
</comment>
<comment type="interaction">
    <interactant intactId="EBI-6985663">
        <id>Q6PHU5</id>
    </interactant>
    <interactant intactId="EBI-775825">
        <id>Q9EQH3</id>
        <label>Vps35</label>
    </interactant>
    <organismsDiffer>false</organismsDiffer>
    <experiments>3</experiments>
</comment>
<comment type="subcellular location">
    <subcellularLocation>
        <location evidence="3">Golgi apparatus</location>
        <location evidence="3">Golgi stack membrane</location>
        <topology evidence="3">Single-pass type I membrane protein</topology>
    </subcellularLocation>
    <subcellularLocation>
        <location evidence="3">Endosome membrane</location>
        <topology evidence="3">Single-pass type I membrane protein</topology>
    </subcellularLocation>
    <subcellularLocation>
        <location evidence="3">Endoplasmic reticulum membrane</location>
        <topology evidence="3">Single-pass type I membrane protein</topology>
    </subcellularLocation>
    <subcellularLocation>
        <location evidence="3">Nucleus membrane</location>
        <topology evidence="3">Single-pass type I membrane protein</topology>
    </subcellularLocation>
    <subcellularLocation>
        <location evidence="3">Cell membrane</location>
        <topology evidence="3">Single-pass type I membrane protein</topology>
        <orientation evidence="3">Extracellular side</orientation>
    </subcellularLocation>
    <subcellularLocation>
        <location evidence="3">Lysosome membrane</location>
        <topology evidence="3">Single-pass type I membrane protein</topology>
    </subcellularLocation>
    <text evidence="3">Localized to membranes of the endoplasmic reticulum, endosomes, Golgi stack, lysosomes and nucleus. A small fraction of the protein is also localized to the plasma membrane. May also be found in SLC2A4/GLUT4 storage vesicles (GSVs) in adipocytes. Localization to the plasma membrane in adipocytes may be enhanced by insulin.</text>
</comment>
<comment type="alternative products">
    <event type="alternative splicing"/>
    <isoform>
        <id>Q6PHU5-1</id>
        <name>1</name>
        <sequence type="displayed"/>
    </isoform>
    <isoform>
        <id>Q6PHU5-2</id>
        <name>2</name>
        <sequence type="described" ref="VSP_016650"/>
    </isoform>
</comment>
<comment type="tissue specificity">
    <text evidence="6">Expressed in the brain, particularly the piriform cortex, the cerebral cortex and the hippocampus.</text>
</comment>
<comment type="developmental stage">
    <text evidence="6">Expressed in the ectoderm at 7.5 dpc and within the germ cell layers at 8.5 dpc. Expressed within the neural epithelium and the neural tube at 9.5 dpc and subsequently expressed in the nervous system throughout development. Expression in the proliferative zones of the central nervous system declines between 14.5 dpc and 16.5 dpc, while expression remains high in the cerebral cortex and the neural retina. Expressed in the pituitary and the sensory epithelia throughout development.</text>
</comment>
<comment type="induction">
    <text evidence="12 15">During adipocyte differentiation.</text>
</comment>
<comment type="domain">
    <text evidence="1">The N-terminal propeptide may facilitate precursor transport within the Golgi stack. Intrachain binding of the N-terminal propeptide and the extracellular domain may also inhibit premature ligand binding (By similarity).</text>
</comment>
<comment type="domain">
    <text evidence="1">The extracellular domain may be shed following protease cleavage in some cell types.</text>
</comment>
<comment type="PTM">
    <text evidence="3">The N-terminal propeptide is cleaved by furin and possibly other homologous proteases.</text>
</comment>
<comment type="PTM">
    <text evidence="3">Phosphorylation at Ser-819 facilitates the interaction with GGA1.</text>
</comment>
<comment type="PTM">
    <text evidence="3">Palmitoylated. Undergoes cysteine S-palmitoylation which promotes the partitioning of the receptor into an endosomal membrane subdomain where it can interact with the retromer cargo-selective complex which mediates its retrograde trafficking to the Golgi apparatus.</text>
</comment>
<comment type="similarity">
    <text evidence="17">Belongs to the VPS10-related sortilin family. SORT1 subfamily.</text>
</comment>
<proteinExistence type="evidence at protein level"/>
<name>SORT_MOUSE</name>
<feature type="signal peptide" evidence="2">
    <location>
        <begin position="1"/>
        <end position="31"/>
    </location>
</feature>
<feature type="propeptide" id="PRO_0000045155" description="Removed in mature form" evidence="2">
    <location>
        <begin position="32"/>
        <end position="73"/>
    </location>
</feature>
<feature type="chain" id="PRO_0000436377" description="Sortilin">
    <location>
        <begin position="74"/>
        <end position="825"/>
    </location>
</feature>
<feature type="topological domain" description="Extracellular" evidence="4">
    <location>
        <begin position="74"/>
        <end position="754"/>
    </location>
</feature>
<feature type="transmembrane region" description="Helical" evidence="4">
    <location>
        <begin position="755"/>
        <end position="775"/>
    </location>
</feature>
<feature type="topological domain" description="Cytoplasmic" evidence="4">
    <location>
        <begin position="776"/>
        <end position="825"/>
    </location>
</feature>
<feature type="repeat" description="BNR 1">
    <location>
        <begin position="143"/>
        <end position="154"/>
    </location>
</feature>
<feature type="repeat" description="BNR 2">
    <location>
        <begin position="196"/>
        <end position="207"/>
    </location>
</feature>
<feature type="repeat" description="BNR 3">
    <location>
        <begin position="238"/>
        <end position="249"/>
    </location>
</feature>
<feature type="repeat" description="BNR 4">
    <location>
        <begin position="285"/>
        <end position="296"/>
    </location>
</feature>
<feature type="repeat" description="BNR 5">
    <location>
        <begin position="326"/>
        <end position="337"/>
    </location>
</feature>
<feature type="repeat" description="BNR 6">
    <location>
        <begin position="375"/>
        <end position="386"/>
    </location>
</feature>
<feature type="repeat" description="BNR 7">
    <location>
        <begin position="426"/>
        <end position="437"/>
    </location>
</feature>
<feature type="repeat" description="BNR 8">
    <location>
        <begin position="504"/>
        <end position="515"/>
    </location>
</feature>
<feature type="repeat" description="BNR 9">
    <location>
        <begin position="546"/>
        <end position="557"/>
    </location>
</feature>
<feature type="region of interest" description="Intrachain binding of the propeptide and the extracellular domain" evidence="1">
    <location>
        <begin position="48"/>
        <end position="59"/>
    </location>
</feature>
<feature type="region of interest" description="Interactions with LRPAP1 and NGFB" evidence="1">
    <location>
        <begin position="610"/>
        <end position="754"/>
    </location>
</feature>
<feature type="region of interest" description="Golgi to endosome transport and interactions with GGA1 and GGA2" evidence="1">
    <location>
        <begin position="777"/>
        <end position="825"/>
    </location>
</feature>
<feature type="region of interest" description="Disordered" evidence="5">
    <location>
        <begin position="804"/>
        <end position="825"/>
    </location>
</feature>
<feature type="short sequence motif" description="Endocytosis signal" evidence="4">
    <location>
        <begin position="785"/>
        <end position="790"/>
    </location>
</feature>
<feature type="short sequence motif" description="DXXLL motif involved in the interaction with GGA1" evidence="3">
    <location>
        <begin position="820"/>
        <end position="824"/>
    </location>
</feature>
<feature type="modified residue" description="Phosphoserine" evidence="3">
    <location>
        <position position="809"/>
    </location>
</feature>
<feature type="modified residue" description="Phosphoserine" evidence="3">
    <location>
        <position position="813"/>
    </location>
</feature>
<feature type="modified residue" description="Phosphoserine" evidence="19 20">
    <location>
        <position position="819"/>
    </location>
</feature>
<feature type="lipid moiety-binding region" description="S-palmitoyl cysteine" evidence="3">
    <location>
        <position position="781"/>
    </location>
</feature>
<feature type="glycosylation site" description="N-linked (GlcNAc...) asparagine" evidence="4">
    <location>
        <position position="96"/>
    </location>
</feature>
<feature type="glycosylation site" description="N-linked (GlcNAc...) asparagine" evidence="4">
    <location>
        <position position="160"/>
    </location>
</feature>
<feature type="glycosylation site" description="N-linked (GlcNAc...) asparagine" evidence="4">
    <location>
        <position position="272"/>
    </location>
</feature>
<feature type="glycosylation site" description="N-linked (GlcNAc...) asparagine" evidence="4">
    <location>
        <position position="404"/>
    </location>
</feature>
<feature type="glycosylation site" description="N-linked (GlcNAc...) asparagine" evidence="4">
    <location>
        <position position="580"/>
    </location>
</feature>
<feature type="glycosylation site" description="N-linked (GlcNAc...) asparagine" evidence="4">
    <location>
        <position position="682"/>
    </location>
</feature>
<feature type="disulfide bond" evidence="1">
    <location>
        <begin position="84"/>
        <end position="554"/>
    </location>
</feature>
<feature type="disulfide bond" evidence="1">
    <location>
        <begin position="255"/>
        <end position="275"/>
    </location>
</feature>
<feature type="disulfide bond" evidence="1">
    <location>
        <begin position="446"/>
        <end position="456"/>
    </location>
</feature>
<feature type="disulfide bond" evidence="1">
    <location>
        <begin position="610"/>
        <end position="649"/>
    </location>
</feature>
<feature type="disulfide bond" evidence="1">
    <location>
        <begin position="632"/>
        <end position="664"/>
    </location>
</feature>
<feature type="disulfide bond" evidence="1">
    <location>
        <begin position="666"/>
        <end position="721"/>
    </location>
</feature>
<feature type="disulfide bond" evidence="1">
    <location>
        <begin position="673"/>
        <end position="686"/>
    </location>
</feature>
<feature type="disulfide bond" evidence="1">
    <location>
        <begin position="700"/>
        <end position="738"/>
    </location>
</feature>
<feature type="splice variant" id="VSP_016650" description="In isoform 2." evidence="16">
    <original>Q</original>
    <variation>QDSRPQGHSLSQNPAPPPLGYTENTHFLSPTQKQ</variation>
    <location>
        <position position="748"/>
    </location>
</feature>
<feature type="sequence conflict" description="In Ref. 1; AAF22639." evidence="17" ref="1">
    <original>V</original>
    <variation>E</variation>
    <location>
        <position position="315"/>
    </location>
</feature>
<feature type="helix" evidence="21">
    <location>
        <begin position="92"/>
        <end position="95"/>
    </location>
</feature>
<feature type="strand" evidence="21">
    <location>
        <begin position="98"/>
        <end position="103"/>
    </location>
</feature>
<feature type="strand" evidence="21">
    <location>
        <begin position="108"/>
        <end position="119"/>
    </location>
</feature>
<feature type="strand" evidence="21">
    <location>
        <begin position="121"/>
        <end position="128"/>
    </location>
</feature>
<feature type="strand" evidence="23">
    <location>
        <begin position="132"/>
        <end position="134"/>
    </location>
</feature>
<feature type="strand" evidence="21">
    <location>
        <begin position="139"/>
        <end position="147"/>
    </location>
</feature>
<feature type="helix" evidence="21">
    <location>
        <begin position="156"/>
        <end position="159"/>
    </location>
</feature>
<feature type="strand" evidence="22">
    <location>
        <begin position="162"/>
        <end position="165"/>
    </location>
</feature>
<feature type="helix" evidence="21">
    <location>
        <begin position="166"/>
        <end position="168"/>
    </location>
</feature>
<feature type="strand" evidence="21">
    <location>
        <begin position="170"/>
        <end position="172"/>
    </location>
</feature>
<feature type="turn" evidence="22">
    <location>
        <begin position="175"/>
        <end position="177"/>
    </location>
</feature>
<feature type="strand" evidence="21">
    <location>
        <begin position="180"/>
        <end position="184"/>
    </location>
</feature>
<feature type="strand" evidence="21">
    <location>
        <begin position="194"/>
        <end position="200"/>
    </location>
</feature>
<feature type="strand" evidence="21">
    <location>
        <begin position="206"/>
        <end position="209"/>
    </location>
</feature>
<feature type="strand" evidence="21">
    <location>
        <begin position="214"/>
        <end position="216"/>
    </location>
</feature>
<feature type="strand" evidence="21">
    <location>
        <begin position="219"/>
        <end position="221"/>
    </location>
</feature>
<feature type="strand" evidence="21">
    <location>
        <begin position="224"/>
        <end position="232"/>
    </location>
</feature>
<feature type="strand" evidence="21">
    <location>
        <begin position="237"/>
        <end position="242"/>
    </location>
</feature>
<feature type="strand" evidence="21">
    <location>
        <begin position="248"/>
        <end position="259"/>
    </location>
</feature>
<feature type="helix" evidence="21">
    <location>
        <begin position="261"/>
        <end position="263"/>
    </location>
</feature>
<feature type="strand" evidence="21">
    <location>
        <begin position="265"/>
        <end position="269"/>
    </location>
</feature>
<feature type="strand" evidence="21">
    <location>
        <begin position="271"/>
        <end position="273"/>
    </location>
</feature>
<feature type="turn" evidence="21">
    <location>
        <begin position="275"/>
        <end position="280"/>
    </location>
</feature>
<feature type="strand" evidence="21">
    <location>
        <begin position="281"/>
        <end position="289"/>
    </location>
</feature>
<feature type="strand" evidence="21">
    <location>
        <begin position="295"/>
        <end position="307"/>
    </location>
</feature>
<feature type="strand" evidence="21">
    <location>
        <begin position="310"/>
        <end position="316"/>
    </location>
</feature>
<feature type="strand" evidence="21">
    <location>
        <begin position="318"/>
        <end position="321"/>
    </location>
</feature>
<feature type="strand" evidence="21">
    <location>
        <begin position="323"/>
        <end position="330"/>
    </location>
</feature>
<feature type="strand" evidence="21">
    <location>
        <begin position="349"/>
        <end position="354"/>
    </location>
</feature>
<feature type="strand" evidence="21">
    <location>
        <begin position="359"/>
        <end position="364"/>
    </location>
</feature>
<feature type="strand" evidence="21">
    <location>
        <begin position="366"/>
        <end position="377"/>
    </location>
</feature>
<feature type="strand" evidence="21">
    <location>
        <begin position="384"/>
        <end position="393"/>
    </location>
</feature>
<feature type="turn" evidence="22">
    <location>
        <begin position="395"/>
        <end position="397"/>
    </location>
</feature>
<feature type="strand" evidence="21">
    <location>
        <begin position="412"/>
        <end position="417"/>
    </location>
</feature>
<feature type="strand" evidence="21">
    <location>
        <begin position="423"/>
        <end position="430"/>
    </location>
</feature>
<feature type="strand" evidence="21">
    <location>
        <begin position="436"/>
        <end position="438"/>
    </location>
</feature>
<feature type="strand" evidence="21">
    <location>
        <begin position="457"/>
        <end position="460"/>
    </location>
</feature>
<feature type="helix" evidence="21">
    <location>
        <begin position="463"/>
        <end position="467"/>
    </location>
</feature>
<feature type="strand" evidence="23">
    <location>
        <begin position="480"/>
        <end position="482"/>
    </location>
</feature>
<feature type="strand" evidence="21">
    <location>
        <begin position="486"/>
        <end position="495"/>
    </location>
</feature>
<feature type="strand" evidence="21">
    <location>
        <begin position="502"/>
        <end position="512"/>
    </location>
</feature>
<feature type="strand" evidence="21">
    <location>
        <begin position="514"/>
        <end position="519"/>
    </location>
</feature>
<feature type="strand" evidence="21">
    <location>
        <begin position="521"/>
        <end position="526"/>
    </location>
</feature>
<feature type="helix" evidence="21">
    <location>
        <begin position="527"/>
        <end position="529"/>
    </location>
</feature>
<feature type="strand" evidence="21">
    <location>
        <begin position="531"/>
        <end position="536"/>
    </location>
</feature>
<feature type="strand" evidence="22">
    <location>
        <begin position="538"/>
        <end position="540"/>
    </location>
</feature>
<feature type="strand" evidence="21">
    <location>
        <begin position="544"/>
        <end position="550"/>
    </location>
</feature>
<feature type="strand" evidence="21">
    <location>
        <begin position="556"/>
        <end position="559"/>
    </location>
</feature>
<feature type="strand" evidence="21">
    <location>
        <begin position="565"/>
        <end position="571"/>
    </location>
</feature>
<feature type="strand" evidence="21">
    <location>
        <begin position="579"/>
        <end position="588"/>
    </location>
</feature>
<feature type="strand" evidence="24">
    <location>
        <begin position="589"/>
        <end position="592"/>
    </location>
</feature>
<feature type="strand" evidence="21">
    <location>
        <begin position="593"/>
        <end position="601"/>
    </location>
</feature>
<feature type="turn" evidence="21">
    <location>
        <begin position="603"/>
        <end position="605"/>
    </location>
</feature>
<feature type="helix" evidence="21">
    <location>
        <begin position="612"/>
        <end position="614"/>
    </location>
</feature>
<feature type="strand" evidence="21">
    <location>
        <begin position="615"/>
        <end position="619"/>
    </location>
</feature>
<feature type="strand" evidence="22">
    <location>
        <begin position="623"/>
        <end position="626"/>
    </location>
</feature>
<feature type="turn" evidence="21">
    <location>
        <begin position="628"/>
        <end position="631"/>
    </location>
</feature>
<feature type="strand" evidence="21">
    <location>
        <begin position="636"/>
        <end position="643"/>
    </location>
</feature>
<feature type="strand" evidence="21">
    <location>
        <begin position="659"/>
        <end position="663"/>
    </location>
</feature>
<feature type="helix" evidence="21">
    <location>
        <begin position="668"/>
        <end position="670"/>
    </location>
</feature>
<feature type="strand" evidence="22">
    <location>
        <begin position="671"/>
        <end position="673"/>
    </location>
</feature>
<feature type="helix" evidence="22">
    <location>
        <begin position="690"/>
        <end position="692"/>
    </location>
</feature>
<feature type="strand" evidence="24">
    <location>
        <begin position="693"/>
        <end position="695"/>
    </location>
</feature>
<feature type="strand" evidence="22">
    <location>
        <begin position="697"/>
        <end position="701"/>
    </location>
</feature>
<feature type="strand" evidence="22">
    <location>
        <begin position="704"/>
        <end position="715"/>
    </location>
</feature>
<feature type="strand" evidence="22">
    <location>
        <begin position="729"/>
        <end position="737"/>
    </location>
</feature>
<gene>
    <name evidence="18" type="primary">Sort1</name>
</gene>
<sequence>MERPRGAADGLLRWPLGLLLLLQLLPPAAVGQDRLDAPPPPAPPLLRWAGPVGVSWGLRAAAPGGPVPRAGRWRRGAPAEDQDCGRLPDFIAKLTNNTHQHVFDDLSGSVSLSWVGDSTGVILVLTTFQVPLVIVSFGQSKLYRSEDYGKNFKDITNLINNTFIRTEFGMAIGPENSGKVILTAEVSGGSRGGRVFRSSDFAKNFVQTDLPFHPLTQMMYSPQNSDYLLALSTENGLWVSKNFGEKWEEIHKAVCLAKWGPNNIIFFTTHVNGSCKADLGALELWRTSDLGKTFKTIGVKIYSFGLGGRFLFASVMADKDTTRRIHVSTDQGDTWSMAQLPSVGQEQFYSILAANEDMVFMHVDEPGDTGFGTIFTSDDRGIVYSKSLDRHLYTTTGGETDFTNVTSLRGVYITSTLSEDNSIQSMITFDQGGRWEHLRKPENSKCDATAKNKNECSLHIHASYSISQKLNVPMAPLSEPNAVGIVIAHGSVGDAISVMVPDVYISDDGGYSWAKMLEGPHYYTILDSGGIIVAIEHSNRPINVIKFSTDEGQCWQSYVFTQEPIYFTGLASEPGARSMNISIWGFTESFITRQWVSYTVDFKDILERNCEEDDYTTWLAHSTDPGDYKDGCILGYKEQFLRLRKSSVCQNGRDYVVAKQPSVCPCSLEDFLCDFGYFRPENASECVEQPELKGHELEFCLYGKEEHLTTNGYRKIPGDKCQGGMNPAREVKDLKKKCTSNFLNPTKQNSKSNSVPIILAIVGLMLVTVVAGVLIVKKYVCGGRFLVHRYSVLQQHAEADGVEALDSTSHAKSGYHDDSDEDLLE</sequence>
<organism>
    <name type="scientific">Mus musculus</name>
    <name type="common">Mouse</name>
    <dbReference type="NCBI Taxonomy" id="10090"/>
    <lineage>
        <taxon>Eukaryota</taxon>
        <taxon>Metazoa</taxon>
        <taxon>Chordata</taxon>
        <taxon>Craniata</taxon>
        <taxon>Vertebrata</taxon>
        <taxon>Euteleostomi</taxon>
        <taxon>Mammalia</taxon>
        <taxon>Eutheria</taxon>
        <taxon>Euarchontoglires</taxon>
        <taxon>Glires</taxon>
        <taxon>Rodentia</taxon>
        <taxon>Myomorpha</taxon>
        <taxon>Muroidea</taxon>
        <taxon>Muridae</taxon>
        <taxon>Murinae</taxon>
        <taxon>Mus</taxon>
        <taxon>Mus</taxon>
    </lineage>
</organism>